<feature type="signal peptide" evidence="2">
    <location>
        <begin position="1"/>
        <end position="28"/>
    </location>
</feature>
<feature type="chain" id="PRO_5004323986" description="1-butanol dehydrogenase (quinone)">
    <location>
        <begin position="29"/>
        <end position="623"/>
    </location>
</feature>
<feature type="region of interest" description="Disordered" evidence="3">
    <location>
        <begin position="235"/>
        <end position="274"/>
    </location>
</feature>
<feature type="region of interest" description="Disordered" evidence="3">
    <location>
        <begin position="420"/>
        <end position="440"/>
    </location>
</feature>
<feature type="active site" description="Proton acceptor" evidence="1">
    <location>
        <position position="345"/>
    </location>
</feature>
<feature type="binding site" evidence="1">
    <location>
        <position position="40"/>
    </location>
    <ligand>
        <name>Ca(2+)</name>
        <dbReference type="ChEBI" id="CHEBI:29108"/>
        <label>1</label>
    </ligand>
</feature>
<feature type="binding site" evidence="1">
    <location>
        <position position="43"/>
    </location>
    <ligand>
        <name>Ca(2+)</name>
        <dbReference type="ChEBI" id="CHEBI:29108"/>
        <label>1</label>
    </ligand>
</feature>
<feature type="binding site" evidence="1">
    <location>
        <position position="46"/>
    </location>
    <ligand>
        <name>Ca(2+)</name>
        <dbReference type="ChEBI" id="CHEBI:29108"/>
        <label>1</label>
    </ligand>
</feature>
<feature type="binding site" evidence="1">
    <location>
        <position position="90"/>
    </location>
    <ligand>
        <name>pyrroloquinoline quinone</name>
        <dbReference type="ChEBI" id="CHEBI:58442"/>
    </ligand>
</feature>
<feature type="binding site" evidence="1">
    <location>
        <position position="140"/>
    </location>
    <ligand>
        <name>pyrroloquinoline quinone</name>
        <dbReference type="ChEBI" id="CHEBI:58442"/>
    </ligand>
</feature>
<feature type="binding site" evidence="1">
    <location>
        <position position="184"/>
    </location>
    <ligand>
        <name>pyrroloquinoline quinone</name>
        <dbReference type="ChEBI" id="CHEBI:58442"/>
    </ligand>
</feature>
<feature type="binding site" evidence="1">
    <location>
        <begin position="202"/>
        <end position="204"/>
    </location>
    <ligand>
        <name>pyrroloquinoline quinone</name>
        <dbReference type="ChEBI" id="CHEBI:58442"/>
    </ligand>
</feature>
<feature type="binding site" evidence="1">
    <location>
        <position position="208"/>
    </location>
    <ligand>
        <name>Ca(2+)</name>
        <dbReference type="ChEBI" id="CHEBI:29108"/>
        <label>2</label>
    </ligand>
</feature>
<feature type="binding site" evidence="1">
    <location>
        <position position="295"/>
    </location>
    <ligand>
        <name>Ca(2+)</name>
        <dbReference type="ChEBI" id="CHEBI:29108"/>
        <label>2</label>
    </ligand>
</feature>
<feature type="binding site" evidence="1">
    <location>
        <position position="345"/>
    </location>
    <ligand>
        <name>Ca(2+)</name>
        <dbReference type="ChEBI" id="CHEBI:29108"/>
        <label>2</label>
    </ligand>
</feature>
<feature type="binding site" evidence="1">
    <location>
        <position position="374"/>
    </location>
    <ligand>
        <name>pyrroloquinoline quinone</name>
        <dbReference type="ChEBI" id="CHEBI:58442"/>
    </ligand>
</feature>
<feature type="binding site" evidence="1">
    <location>
        <position position="592"/>
    </location>
    <ligand>
        <name>pyrroloquinoline quinone</name>
        <dbReference type="ChEBI" id="CHEBI:58442"/>
    </ligand>
</feature>
<feature type="disulfide bond" evidence="1">
    <location>
        <begin position="134"/>
        <end position="135"/>
    </location>
</feature>
<name>BOH_THABB</name>
<accession>Q9AGW3</accession>
<dbReference type="EC" id="1.1.5.11" evidence="5 9"/>
<dbReference type="EMBL" id="AF326086">
    <property type="protein sequence ID" value="AAK15506.1"/>
    <property type="molecule type" value="Genomic_DNA"/>
</dbReference>
<dbReference type="SMR" id="Q9AGW3"/>
<dbReference type="KEGG" id="ag:AAK15506"/>
<dbReference type="BioCyc" id="MetaCyc:MONOMER-19862"/>
<dbReference type="BRENDA" id="1.2.5.2">
    <property type="organism ID" value="8965"/>
</dbReference>
<dbReference type="GO" id="GO:0016020">
    <property type="term" value="C:membrane"/>
    <property type="evidence" value="ECO:0007669"/>
    <property type="project" value="InterPro"/>
</dbReference>
<dbReference type="GO" id="GO:0030288">
    <property type="term" value="C:outer membrane-bounded periplasmic space"/>
    <property type="evidence" value="ECO:0007669"/>
    <property type="project" value="InterPro"/>
</dbReference>
<dbReference type="GO" id="GO:0005509">
    <property type="term" value="F:calcium ion binding"/>
    <property type="evidence" value="ECO:0007669"/>
    <property type="project" value="InterPro"/>
</dbReference>
<dbReference type="GO" id="GO:0016614">
    <property type="term" value="F:oxidoreductase activity, acting on CH-OH group of donors"/>
    <property type="evidence" value="ECO:0007669"/>
    <property type="project" value="InterPro"/>
</dbReference>
<dbReference type="CDD" id="cd10277">
    <property type="entry name" value="PQQ_ADH_I"/>
    <property type="match status" value="1"/>
</dbReference>
<dbReference type="FunFam" id="2.140.10.10:FF:000003">
    <property type="entry name" value="Methanol dehydrogenase, large subunit"/>
    <property type="match status" value="1"/>
</dbReference>
<dbReference type="Gene3D" id="2.140.10.10">
    <property type="entry name" value="Quinoprotein alcohol dehydrogenase-like superfamily"/>
    <property type="match status" value="1"/>
</dbReference>
<dbReference type="InterPro" id="IPR034119">
    <property type="entry name" value="ADHI"/>
</dbReference>
<dbReference type="InterPro" id="IPR018391">
    <property type="entry name" value="PQQ_b-propeller_rpt"/>
</dbReference>
<dbReference type="InterPro" id="IPR017512">
    <property type="entry name" value="PQQ_MeOH/EtOH_DH"/>
</dbReference>
<dbReference type="InterPro" id="IPR002372">
    <property type="entry name" value="PQQ_rpt_dom"/>
</dbReference>
<dbReference type="InterPro" id="IPR011047">
    <property type="entry name" value="Quinoprotein_ADH-like_sf"/>
</dbReference>
<dbReference type="InterPro" id="IPR001479">
    <property type="entry name" value="Quinoprotein_DH_CS"/>
</dbReference>
<dbReference type="NCBIfam" id="TIGR03075">
    <property type="entry name" value="PQQ_enz_alc_DH"/>
    <property type="match status" value="1"/>
</dbReference>
<dbReference type="PANTHER" id="PTHR32303">
    <property type="entry name" value="QUINOPROTEIN ALCOHOL DEHYDROGENASE (CYTOCHROME C)"/>
    <property type="match status" value="1"/>
</dbReference>
<dbReference type="PANTHER" id="PTHR32303:SF20">
    <property type="entry name" value="QUINOPROTEIN ETHANOL DEHYDROGENASE"/>
    <property type="match status" value="1"/>
</dbReference>
<dbReference type="Pfam" id="PF01011">
    <property type="entry name" value="PQQ"/>
    <property type="match status" value="2"/>
</dbReference>
<dbReference type="SMART" id="SM00564">
    <property type="entry name" value="PQQ"/>
    <property type="match status" value="4"/>
</dbReference>
<dbReference type="SUPFAM" id="SSF50998">
    <property type="entry name" value="Quinoprotein alcohol dehydrogenase-like"/>
    <property type="match status" value="1"/>
</dbReference>
<dbReference type="PROSITE" id="PS00364">
    <property type="entry name" value="BACTERIAL_PQQ_2"/>
    <property type="match status" value="1"/>
</dbReference>
<comment type="function">
    <text evidence="4 5">Involved in the metabolism of butane (PubMed:11889098). May function primarily in energy generation (PubMed:12142403). Catalyzes the oxidation of 1-butanol to 1-butanal (PubMed:11889098, PubMed:12142403). Also able to use 2-butanol and butyraldehyde, although the affinity is comparatively low (PubMed:12142403).</text>
</comment>
<comment type="catalytic activity">
    <reaction evidence="5 9">
        <text>butan-1-ol + a quinone = butanal + a quinol</text>
        <dbReference type="Rhea" id="RHEA:49808"/>
        <dbReference type="ChEBI" id="CHEBI:15743"/>
        <dbReference type="ChEBI" id="CHEBI:24646"/>
        <dbReference type="ChEBI" id="CHEBI:28885"/>
        <dbReference type="ChEBI" id="CHEBI:132124"/>
        <dbReference type="EC" id="1.1.5.11"/>
    </reaction>
</comment>
<comment type="cofactor">
    <cofactor evidence="9">
        <name>pyrroloquinoline quinone</name>
        <dbReference type="ChEBI" id="CHEBI:58442"/>
    </cofactor>
    <text evidence="1">Binds 1 PQQ group per subunit. PQQ is inserted between disulfide Cys-134-Cys-135 and the plane of Trp-277.</text>
</comment>
<comment type="cofactor">
    <cofactor evidence="9">
        <name>Ca(2+)</name>
        <dbReference type="ChEBI" id="CHEBI:29108"/>
    </cofactor>
    <text evidence="1">Binds 2 calcium ions per subunit.</text>
</comment>
<comment type="biophysicochemical properties">
    <kinetics>
        <KM evidence="5">1.7 uM for 1-butanol</KM>
        <KM evidence="5">369 uM for butyraldehyde</KM>
        <KM evidence="5">662 uM for 2-butanol</KM>
    </kinetics>
</comment>
<comment type="subcellular location">
    <subcellularLocation>
        <location evidence="9">Periplasm</location>
    </subcellularLocation>
</comment>
<comment type="induction">
    <text evidence="4 5">By butane, 1-butanol and 2-butanol.</text>
</comment>
<comment type="disruption phenotype">
    <text evidence="4 5">Cells lacking this gene show a delayed growth on butane and are unable to tolerate high level of 1-butanol (PubMed:11889098, PubMed:12142403). When both bdh and boh genes are inactivated, growth on butane and 1-butanol is eliminated (PubMed:11889098).</text>
</comment>
<comment type="similarity">
    <text evidence="8">Belongs to the bacterial PQQ dehydrogenase family.</text>
</comment>
<sequence length="623" mass="67553">MKKSHAKPFALRAIVVATAAALSLPAAAVTDVTWEDIANDHKTTGDVLTYGLGLKAQRHSPLKAINTDNVANLVPAWSFSFGGEKQRGQEAQVLVHDGVIYATASYSRIFAIDARSGKRLWEYNARLPDDIRPCCDVVNRGAAIYGDKVFFGTLDAAMVALDRKTGKVVWRKKFGDHKVGYTMTGAPFVIKDQKSGRTLLVHGSSGDEFGVVGWLFARDPDTGEEVWARPMVEGHMGRLNGKDSTPTGDPKAPSWPDDPNSPTGKVEAWSQGGGAPWQTASFDVENNMVVIGAGNPAPWNTWKRTAPGDDPRNWDSLFTSGQAYVDASTGELKGFYQHTPNDAWDFSGNNSVVLFEYKDPKTGKMVNASAHADRNGFFFVTDRDMLAKGAGYPNKPTSLIGAWPFVDGITWASGFDLKTGKPIEKDNRPPQPKEGADKGESIFVSPPFLGGTNWHPMSYSPDTGLFYIPANHWAMDYWTENVTYKAGSAYLGQGFRIKNLFDDHVGILRAIDPSPARSLGAQGRVPAVAGTLTTAGGWVFTGTSDGYLKAFDAKNGKELWKFQTGSGVVSVPVTWEMDGEQYVAIQSGYGGAVPLWGGDMAELTKQVTQGGSMWVFKLPKASR</sequence>
<organism>
    <name type="scientific">Thauera butanivorans (strain ATCC 43655 / DSM 2080 / JCM 20651 / CCUG 51053 / NBRC 103042 / IAM 12574 / Bu B1211)</name>
    <name type="common">Pseudomonas butanovora</name>
    <dbReference type="NCBI Taxonomy" id="1219356"/>
    <lineage>
        <taxon>Bacteria</taxon>
        <taxon>Pseudomonadati</taxon>
        <taxon>Pseudomonadota</taxon>
        <taxon>Betaproteobacteria</taxon>
        <taxon>Rhodocyclales</taxon>
        <taxon>Zoogloeaceae</taxon>
        <taxon>Thauera</taxon>
    </lineage>
</organism>
<gene>
    <name evidence="6" type="primary">boh</name>
</gene>
<evidence type="ECO:0000250" key="1">
    <source>
        <dbReference type="UniProtKB" id="Q9Z4J7"/>
    </source>
</evidence>
<evidence type="ECO:0000255" key="2"/>
<evidence type="ECO:0000256" key="3">
    <source>
        <dbReference type="SAM" id="MobiDB-lite"/>
    </source>
</evidence>
<evidence type="ECO:0000269" key="4">
    <source>
    </source>
</evidence>
<evidence type="ECO:0000269" key="5">
    <source>
    </source>
</evidence>
<evidence type="ECO:0000303" key="6">
    <source>
    </source>
</evidence>
<evidence type="ECO:0000303" key="7">
    <source>
    </source>
</evidence>
<evidence type="ECO:0000305" key="8"/>
<evidence type="ECO:0000305" key="9">
    <source>
    </source>
</evidence>
<proteinExistence type="evidence at protein level"/>
<protein>
    <recommendedName>
        <fullName evidence="7">1-butanol dehydrogenase (quinone)</fullName>
        <ecNumber evidence="5 9">1.1.5.11</ecNumber>
    </recommendedName>
    <alternativeName>
        <fullName evidence="6">PQQ-containing alcohol dehydrogenase</fullName>
    </alternativeName>
    <alternativeName>
        <fullName evidence="6">Quinoprotein alcohol dehydrogenase</fullName>
    </alternativeName>
</protein>
<keyword id="KW-0106">Calcium</keyword>
<keyword id="KW-1015">Disulfide bond</keyword>
<keyword id="KW-0479">Metal-binding</keyword>
<keyword id="KW-0560">Oxidoreductase</keyword>
<keyword id="KW-0574">Periplasm</keyword>
<keyword id="KW-0634">PQQ</keyword>
<keyword id="KW-0732">Signal</keyword>
<reference key="1">
    <citation type="journal article" date="2002" name="J. Bacteriol.">
        <title>Two distinct alcohol dehydrogenases participate in butane metabolism by Pseudomonas butanovora.</title>
        <authorList>
            <person name="Vangnai A.S."/>
            <person name="Arp D.J."/>
            <person name="Sayavedra-Soto L.A."/>
        </authorList>
    </citation>
    <scope>NUCLEOTIDE SEQUENCE [GENOMIC DNA]</scope>
    <scope>FUNCTION</scope>
    <scope>CATALYTIC ACTIVITY</scope>
    <scope>COFACTOR</scope>
    <scope>DISRUPTION PHENOTYPE</scope>
    <scope>SUBCELLULAR LOCATION</scope>
    <scope>INDUCTION</scope>
    <source>
        <strain>ATCC 43655 / DSM 2080 / JCM 20651 / CCUG 51053 / NBRC 103042 / IAM 12574 / Bu B1211</strain>
    </source>
</reference>
<reference key="2">
    <citation type="journal article" date="2002" name="J. Bacteriol.">
        <title>Roles for the two 1-butanol dehydrogenases of Pseudomonas butanovora in butane and 1-butanol metabolism.</title>
        <authorList>
            <person name="Vangnai A.S."/>
            <person name="Sayavedra-Soto L.A."/>
            <person name="Arp D.J."/>
        </authorList>
    </citation>
    <scope>FUNCTION</scope>
    <scope>CATALYTIC ACTIVITY</scope>
    <scope>BIOPHYSICOCHEMICAL PROPERTIES</scope>
    <scope>DISRUPTION PHENOTYPE</scope>
    <scope>INDUCTION</scope>
    <scope>SUBSTRATE SPECIFICITY</scope>
    <source>
        <strain>ATCC 43655 / DSM 2080 / JCM 20651 / CCUG 51053 / NBRC 103042 / IAM 12574 / Bu B1211</strain>
    </source>
</reference>